<gene>
    <name type="ORF">ORF58</name>
</gene>
<organism>
    <name type="scientific">Varicella-zoster virus (strain Oka vaccine)</name>
    <name type="common">HHV-3</name>
    <name type="synonym">Human herpesvirus 3</name>
    <dbReference type="NCBI Taxonomy" id="341980"/>
    <lineage>
        <taxon>Viruses</taxon>
        <taxon>Duplodnaviria</taxon>
        <taxon>Heunggongvirae</taxon>
        <taxon>Peploviricota</taxon>
        <taxon>Herviviricetes</taxon>
        <taxon>Herpesvirales</taxon>
        <taxon>Orthoherpesviridae</taxon>
        <taxon>Alphaherpesvirinae</taxon>
        <taxon>Varicellovirus</taxon>
        <taxon>Varicellovirus humanalpha3</taxon>
        <taxon>Human herpesvirus 3</taxon>
    </lineage>
</organism>
<evidence type="ECO:0000250" key="1"/>
<evidence type="ECO:0000305" key="2"/>
<comment type="subcellular location">
    <subcellularLocation>
        <location evidence="1">Host nucleus</location>
    </subcellularLocation>
</comment>
<comment type="PTM">
    <text evidence="1">Phosphorylated.</text>
</comment>
<comment type="similarity">
    <text evidence="2">Belongs to the alphaherpesvirinae HHV-1 UL3 family.</text>
</comment>
<dbReference type="EMBL" id="AF206304">
    <property type="protein sequence ID" value="AAF61659.1"/>
    <property type="molecule type" value="Genomic_DNA"/>
</dbReference>
<dbReference type="EMBL" id="AB097932">
    <property type="status" value="NOT_ANNOTATED_CDS"/>
    <property type="molecule type" value="Genomic_DNA"/>
</dbReference>
<dbReference type="EMBL" id="AB097933">
    <property type="status" value="NOT_ANNOTATED_CDS"/>
    <property type="molecule type" value="Genomic_DNA"/>
</dbReference>
<dbReference type="EMBL" id="DQ008354">
    <property type="protein sequence ID" value="AAY57667.1"/>
    <property type="molecule type" value="Genomic_DNA"/>
</dbReference>
<dbReference type="EMBL" id="DQ008355">
    <property type="protein sequence ID" value="AAY57738.1"/>
    <property type="molecule type" value="Genomic_DNA"/>
</dbReference>
<dbReference type="IntAct" id="Q9J3N3">
    <property type="interactions" value="8"/>
</dbReference>
<dbReference type="Proteomes" id="UP000002603">
    <property type="component" value="Genome"/>
</dbReference>
<dbReference type="Proteomes" id="UP000008504">
    <property type="component" value="Genome"/>
</dbReference>
<dbReference type="Proteomes" id="UP000008505">
    <property type="component" value="Genome"/>
</dbReference>
<dbReference type="Proteomes" id="UP000008506">
    <property type="component" value="Genome"/>
</dbReference>
<dbReference type="GO" id="GO:0042025">
    <property type="term" value="C:host cell nucleus"/>
    <property type="evidence" value="ECO:0007669"/>
    <property type="project" value="UniProtKB-SubCell"/>
</dbReference>
<dbReference type="InterPro" id="IPR005035">
    <property type="entry name" value="Herpes_UL3"/>
</dbReference>
<dbReference type="Pfam" id="PF03369">
    <property type="entry name" value="Herpes_UL3"/>
    <property type="match status" value="1"/>
</dbReference>
<reference key="1">
    <citation type="journal article" date="2000" name="J. Infect. Dis.">
        <title>Nucleotide sequences that distinguish Oka vaccine from parental Oka and other varicella-zoster virus isolates.</title>
        <authorList>
            <person name="Argaw T."/>
            <person name="Cohen J.I."/>
            <person name="Klutch M."/>
            <person name="Lekstrom K."/>
            <person name="Yoshikawa T."/>
            <person name="Asano Y."/>
            <person name="Krause P.R."/>
        </authorList>
    </citation>
    <scope>NUCLEOTIDE SEQUENCE [GENOMIC DNA]</scope>
    <source>
        <strain>Oka varicella vaccine Biken (V-Oka-Biken)</strain>
    </source>
</reference>
<reference key="2">
    <citation type="journal article" date="2002" name="J. Virol.">
        <title>Comparison of the complete DNA sequences of the Oka varicella vaccine and its parental virus.</title>
        <authorList>
            <person name="Gomi Y."/>
            <person name="Sunamachi H."/>
            <person name="Mori Y."/>
            <person name="Nagaike K."/>
            <person name="Takahashi M."/>
            <person name="Yamanishi K."/>
        </authorList>
    </citation>
    <scope>NUCLEOTIDE SEQUENCE [LARGE SCALE GENOMIC DNA]</scope>
    <source>
        <strain>Isolate Human/Japan/P-Oka/1970</strain>
        <strain>Oka varicella vaccine Biken (V-Oka-Biken)</strain>
    </source>
</reference>
<reference key="3">
    <citation type="journal article" date="2008" name="J. Virol.">
        <title>Complete DNA sequences of two oka strain varicella-zoster virus genomes.</title>
        <authorList>
            <person name="Tillieux S.L."/>
            <person name="Halsey W.S."/>
            <person name="Thomas E.S."/>
            <person name="Voycik J.J."/>
            <person name="Sathe G.M."/>
            <person name="Vassilev V."/>
        </authorList>
    </citation>
    <scope>NUCLEOTIDE SEQUENCE [LARGE SCALE GENOMIC DNA]</scope>
    <source>
        <strain>Oka varicella vaccine VarilRix (V-Oka-GSK)</strain>
        <strain>Oka varicella vaccine Varivax (V-Oka-Merck)</strain>
    </source>
</reference>
<keyword id="KW-1048">Host nucleus</keyword>
<keyword id="KW-0597">Phosphoprotein</keyword>
<protein>
    <recommendedName>
        <fullName>Nuclear phosphoprotein UL3 homolog</fullName>
    </recommendedName>
    <alternativeName>
        <fullName>ORF58 protein</fullName>
    </alternativeName>
</protein>
<name>NP03_VZVO</name>
<organismHost>
    <name type="scientific">Homo sapiens</name>
    <name type="common">Human</name>
    <dbReference type="NCBI Taxonomy" id="9606"/>
</organismHost>
<proteinExistence type="inferred from homology"/>
<accession>Q9J3N3</accession>
<sequence>MFSELPPSVPTALLQWGWGLHRGPCSIPNFKQVASQHSVQTDFTENSVDANENFPIGHAGCIEKTKDDYVPFDTLFMVSSIDELGRRQLTDTIRRSLIMNACEITVACTKTAAFSGRGVSRQKHVTLSKNKFNPSSHKSLQMFVLCQKTHAPRVRNLLYESIRARRPRRYYTRSTDGKSRPLVPVFVYEFTALDRVLLHKENTLTDQPINTENSGHGRTRT</sequence>
<feature type="chain" id="PRO_0000385487" description="Nuclear phosphoprotein UL3 homolog">
    <location>
        <begin position="1"/>
        <end position="221"/>
    </location>
</feature>